<dbReference type="EMBL" id="AP008226">
    <property type="protein sequence ID" value="BAD71179.1"/>
    <property type="molecule type" value="Genomic_DNA"/>
</dbReference>
<dbReference type="RefSeq" id="WP_008632829.1">
    <property type="nucleotide sequence ID" value="NC_006461.1"/>
</dbReference>
<dbReference type="RefSeq" id="YP_144622.1">
    <property type="nucleotide sequence ID" value="NC_006461.1"/>
</dbReference>
<dbReference type="PDB" id="1NZA">
    <property type="method" value="X-ray"/>
    <property type="resolution" value="1.70 A"/>
    <property type="chains" value="A=1-103"/>
</dbReference>
<dbReference type="PDB" id="1V6H">
    <property type="method" value="X-ray"/>
    <property type="resolution" value="1.90 A"/>
    <property type="chains" value="A/B/C=1-103"/>
</dbReference>
<dbReference type="PDB" id="4ZK7">
    <property type="method" value="X-ray"/>
    <property type="resolution" value="3.40 A"/>
    <property type="chains" value="M/N/O/P/Q/R/S/T/U/V/W/X=1-103"/>
</dbReference>
<dbReference type="PDBsum" id="1NZA"/>
<dbReference type="PDBsum" id="1V6H"/>
<dbReference type="PDBsum" id="4ZK7"/>
<dbReference type="SMR" id="Q7SIA8"/>
<dbReference type="EnsemblBacteria" id="BAD71179">
    <property type="protein sequence ID" value="BAD71179"/>
    <property type="gene ID" value="BAD71179"/>
</dbReference>
<dbReference type="GeneID" id="3168527"/>
<dbReference type="KEGG" id="ttj:TTHA1356"/>
<dbReference type="PATRIC" id="fig|300852.9.peg.1333"/>
<dbReference type="eggNOG" id="COG1324">
    <property type="taxonomic scope" value="Bacteria"/>
</dbReference>
<dbReference type="HOGENOM" id="CLU_098807_3_1_0"/>
<dbReference type="PhylomeDB" id="Q7SIA8"/>
<dbReference type="EvolutionaryTrace" id="Q7SIA8"/>
<dbReference type="Proteomes" id="UP000000532">
    <property type="component" value="Chromosome"/>
</dbReference>
<dbReference type="GO" id="GO:0005737">
    <property type="term" value="C:cytoplasm"/>
    <property type="evidence" value="ECO:0007669"/>
    <property type="project" value="UniProtKB-SubCell"/>
</dbReference>
<dbReference type="GO" id="GO:0005507">
    <property type="term" value="F:copper ion binding"/>
    <property type="evidence" value="ECO:0007669"/>
    <property type="project" value="TreeGrafter"/>
</dbReference>
<dbReference type="GO" id="GO:0010038">
    <property type="term" value="P:response to metal ion"/>
    <property type="evidence" value="ECO:0007669"/>
    <property type="project" value="InterPro"/>
</dbReference>
<dbReference type="Gene3D" id="3.30.70.120">
    <property type="match status" value="1"/>
</dbReference>
<dbReference type="InterPro" id="IPR004323">
    <property type="entry name" value="Ion_tolerance_CutA"/>
</dbReference>
<dbReference type="InterPro" id="IPR011322">
    <property type="entry name" value="N-reg_PII-like_a/b"/>
</dbReference>
<dbReference type="InterPro" id="IPR015867">
    <property type="entry name" value="N-reg_PII/ATP_PRibTrfase_C"/>
</dbReference>
<dbReference type="PANTHER" id="PTHR23419">
    <property type="entry name" value="DIVALENT CATION TOLERANCE CUTA-RELATED"/>
    <property type="match status" value="1"/>
</dbReference>
<dbReference type="PANTHER" id="PTHR23419:SF8">
    <property type="entry name" value="FI09726P"/>
    <property type="match status" value="1"/>
</dbReference>
<dbReference type="Pfam" id="PF03091">
    <property type="entry name" value="CutA1"/>
    <property type="match status" value="1"/>
</dbReference>
<dbReference type="SUPFAM" id="SSF54913">
    <property type="entry name" value="GlnB-like"/>
    <property type="match status" value="1"/>
</dbReference>
<proteinExistence type="evidence at protein level"/>
<accession>Q7SIA8</accession>
<accession>Q5SIL3</accession>
<feature type="chain" id="PRO_0000157132" description="Divalent-cation tolerance protein CutA">
    <location>
        <begin position="1"/>
        <end position="103"/>
    </location>
</feature>
<feature type="strand" evidence="3">
    <location>
        <begin position="2"/>
        <end position="11"/>
    </location>
</feature>
<feature type="helix" evidence="3">
    <location>
        <begin position="12"/>
        <end position="24"/>
    </location>
</feature>
<feature type="strand" evidence="3">
    <location>
        <begin position="29"/>
        <end position="45"/>
    </location>
</feature>
<feature type="strand" evidence="3">
    <location>
        <begin position="47"/>
        <end position="60"/>
    </location>
</feature>
<feature type="turn" evidence="3">
    <location>
        <begin position="61"/>
        <end position="63"/>
    </location>
</feature>
<feature type="helix" evidence="3">
    <location>
        <begin position="64"/>
        <end position="74"/>
    </location>
</feature>
<feature type="strand" evidence="3">
    <location>
        <begin position="75"/>
        <end position="79"/>
    </location>
</feature>
<feature type="strand" evidence="3">
    <location>
        <begin position="82"/>
        <end position="86"/>
    </location>
</feature>
<feature type="helix" evidence="3">
    <location>
        <begin position="92"/>
        <end position="100"/>
    </location>
</feature>
<protein>
    <recommendedName>
        <fullName>Divalent-cation tolerance protein CutA</fullName>
    </recommendedName>
</protein>
<gene>
    <name type="primary">cutA</name>
    <name type="ordered locus">TTHA1356</name>
</gene>
<reference key="1">
    <citation type="submission" date="2004-11" db="EMBL/GenBank/DDBJ databases">
        <title>Complete genome sequence of Thermus thermophilus HB8.</title>
        <authorList>
            <person name="Masui R."/>
            <person name="Kurokawa K."/>
            <person name="Nakagawa N."/>
            <person name="Tokunaga F."/>
            <person name="Koyama Y."/>
            <person name="Shibata T."/>
            <person name="Oshima T."/>
            <person name="Yokoyama S."/>
            <person name="Yasunaga T."/>
            <person name="Kuramitsu S."/>
        </authorList>
    </citation>
    <scope>NUCLEOTIDE SEQUENCE [LARGE SCALE GENOMIC DNA]</scope>
    <source>
        <strain>ATCC 27634 / DSM 579 / HB8</strain>
    </source>
</reference>
<reference key="2">
    <citation type="submission" date="2003-02" db="PDB data bank">
        <title>Crystal structure of divalent cation tolerance protein (Cut A1) from Thermus thermophilus HB8.</title>
        <authorList>
            <person name="Bagautdinov B."/>
            <person name="Miyano M."/>
            <person name="Tahirov T.H."/>
        </authorList>
    </citation>
    <scope>X-RAY CRYSTALLOGRAPHY (1.7 ANGSTROMS)</scope>
</reference>
<comment type="function">
    <text evidence="1">Involved in resistance toward heavy metals.</text>
</comment>
<comment type="subunit">
    <text evidence="1">Homotrimer.</text>
</comment>
<comment type="subcellular location">
    <subcellularLocation>
        <location evidence="1">Cytoplasm</location>
    </subcellularLocation>
</comment>
<comment type="similarity">
    <text evidence="2">Belongs to the CutA family.</text>
</comment>
<keyword id="KW-0002">3D-structure</keyword>
<keyword id="KW-0963">Cytoplasm</keyword>
<keyword id="KW-1185">Reference proteome</keyword>
<sequence length="103" mass="11622">MEEVVLITVPSEEVARTIAKALVEERLAACVNIVPGLTSIYRWQGEVVEDQELLLLVKTTTHAFPKLKERVKALHPYTVPEIVALPIAEGNREYLDWLRENTG</sequence>
<name>CUTA_THET8</name>
<organism>
    <name type="scientific">Thermus thermophilus (strain ATCC 27634 / DSM 579 / HB8)</name>
    <dbReference type="NCBI Taxonomy" id="300852"/>
    <lineage>
        <taxon>Bacteria</taxon>
        <taxon>Thermotogati</taxon>
        <taxon>Deinococcota</taxon>
        <taxon>Deinococci</taxon>
        <taxon>Thermales</taxon>
        <taxon>Thermaceae</taxon>
        <taxon>Thermus</taxon>
    </lineage>
</organism>
<evidence type="ECO:0000250" key="1"/>
<evidence type="ECO:0000305" key="2"/>
<evidence type="ECO:0007829" key="3">
    <source>
        <dbReference type="PDB" id="1NZA"/>
    </source>
</evidence>